<dbReference type="EMBL" id="AP008956">
    <property type="protein sequence ID" value="BAE97192.1"/>
    <property type="molecule type" value="Genomic_DNA"/>
</dbReference>
<dbReference type="RefSeq" id="YP_665545.1">
    <property type="nucleotide sequence ID" value="NC_008235.1"/>
</dbReference>
<dbReference type="SMR" id="Q14FH0"/>
<dbReference type="GeneID" id="4178222"/>
<dbReference type="KEGG" id="palz:4178222"/>
<dbReference type="OrthoDB" id="38912at3646"/>
<dbReference type="GO" id="GO:0009535">
    <property type="term" value="C:chloroplast thylakoid membrane"/>
    <property type="evidence" value="ECO:0007669"/>
    <property type="project" value="UniProtKB-SubCell"/>
</dbReference>
<dbReference type="GO" id="GO:0045259">
    <property type="term" value="C:proton-transporting ATP synthase complex"/>
    <property type="evidence" value="ECO:0007669"/>
    <property type="project" value="UniProtKB-KW"/>
</dbReference>
<dbReference type="GO" id="GO:0033177">
    <property type="term" value="C:proton-transporting two-sector ATPase complex, proton-transporting domain"/>
    <property type="evidence" value="ECO:0007669"/>
    <property type="project" value="InterPro"/>
</dbReference>
<dbReference type="GO" id="GO:0008289">
    <property type="term" value="F:lipid binding"/>
    <property type="evidence" value="ECO:0007669"/>
    <property type="project" value="UniProtKB-KW"/>
</dbReference>
<dbReference type="GO" id="GO:0046933">
    <property type="term" value="F:proton-transporting ATP synthase activity, rotational mechanism"/>
    <property type="evidence" value="ECO:0007669"/>
    <property type="project" value="UniProtKB-UniRule"/>
</dbReference>
<dbReference type="CDD" id="cd18183">
    <property type="entry name" value="ATP-synt_Fo_c_ATPH"/>
    <property type="match status" value="1"/>
</dbReference>
<dbReference type="FunFam" id="1.20.20.10:FF:000001">
    <property type="entry name" value="ATP synthase subunit c, chloroplastic"/>
    <property type="match status" value="1"/>
</dbReference>
<dbReference type="Gene3D" id="1.20.20.10">
    <property type="entry name" value="F1F0 ATP synthase subunit C"/>
    <property type="match status" value="1"/>
</dbReference>
<dbReference type="HAMAP" id="MF_01396">
    <property type="entry name" value="ATP_synth_c_bact"/>
    <property type="match status" value="1"/>
</dbReference>
<dbReference type="InterPro" id="IPR005953">
    <property type="entry name" value="ATP_synth_csu_bac/chlpt"/>
</dbReference>
<dbReference type="InterPro" id="IPR000454">
    <property type="entry name" value="ATP_synth_F0_csu"/>
</dbReference>
<dbReference type="InterPro" id="IPR020537">
    <property type="entry name" value="ATP_synth_F0_csu_DDCD_BS"/>
</dbReference>
<dbReference type="InterPro" id="IPR038662">
    <property type="entry name" value="ATP_synth_F0_csu_sf"/>
</dbReference>
<dbReference type="InterPro" id="IPR002379">
    <property type="entry name" value="ATPase_proteolipid_c-like_dom"/>
</dbReference>
<dbReference type="InterPro" id="IPR035921">
    <property type="entry name" value="F/V-ATP_Csub_sf"/>
</dbReference>
<dbReference type="NCBIfam" id="TIGR01260">
    <property type="entry name" value="ATP_synt_c"/>
    <property type="match status" value="1"/>
</dbReference>
<dbReference type="NCBIfam" id="NF005608">
    <property type="entry name" value="PRK07354.1"/>
    <property type="match status" value="1"/>
</dbReference>
<dbReference type="PANTHER" id="PTHR10031">
    <property type="entry name" value="ATP SYNTHASE LIPID-BINDING PROTEIN, MITOCHONDRIAL"/>
    <property type="match status" value="1"/>
</dbReference>
<dbReference type="PANTHER" id="PTHR10031:SF0">
    <property type="entry name" value="ATPASE PROTEIN 9"/>
    <property type="match status" value="1"/>
</dbReference>
<dbReference type="Pfam" id="PF00137">
    <property type="entry name" value="ATP-synt_C"/>
    <property type="match status" value="1"/>
</dbReference>
<dbReference type="PRINTS" id="PR00124">
    <property type="entry name" value="ATPASEC"/>
</dbReference>
<dbReference type="SUPFAM" id="SSF81333">
    <property type="entry name" value="F1F0 ATP synthase subunit C"/>
    <property type="match status" value="1"/>
</dbReference>
<dbReference type="PROSITE" id="PS00605">
    <property type="entry name" value="ATPASE_C"/>
    <property type="match status" value="1"/>
</dbReference>
<feature type="chain" id="PRO_0000362957" description="ATP synthase subunit c, chloroplastic">
    <location>
        <begin position="1"/>
        <end position="81"/>
    </location>
</feature>
<feature type="transmembrane region" description="Helical" evidence="1">
    <location>
        <begin position="3"/>
        <end position="23"/>
    </location>
</feature>
<feature type="transmembrane region" description="Helical" evidence="1">
    <location>
        <begin position="57"/>
        <end position="77"/>
    </location>
</feature>
<feature type="site" description="Reversibly protonated during proton transport" evidence="1">
    <location>
        <position position="61"/>
    </location>
</feature>
<proteinExistence type="inferred from homology"/>
<keyword id="KW-0066">ATP synthesis</keyword>
<keyword id="KW-0138">CF(0)</keyword>
<keyword id="KW-0150">Chloroplast</keyword>
<keyword id="KW-0375">Hydrogen ion transport</keyword>
<keyword id="KW-0406">Ion transport</keyword>
<keyword id="KW-0446">Lipid-binding</keyword>
<keyword id="KW-0472">Membrane</keyword>
<keyword id="KW-0934">Plastid</keyword>
<keyword id="KW-0793">Thylakoid</keyword>
<keyword id="KW-0812">Transmembrane</keyword>
<keyword id="KW-1133">Transmembrane helix</keyword>
<keyword id="KW-0813">Transport</keyword>
<name>ATPH_POPAL</name>
<gene>
    <name evidence="1" type="primary">atpH</name>
</gene>
<reference key="1">
    <citation type="submission" date="2005-03" db="EMBL/GenBank/DDBJ databases">
        <title>Complete structure of the chloroplast genome of Populus alba.</title>
        <authorList>
            <person name="Okumura S."/>
            <person name="Yamashita A."/>
            <person name="Kanamoto H."/>
            <person name="Hattori M."/>
            <person name="Takase H."/>
            <person name="Tomizawa K."/>
        </authorList>
    </citation>
    <scope>NUCLEOTIDE SEQUENCE [LARGE SCALE GENOMIC DNA]</scope>
</reference>
<accession>Q14FH0</accession>
<comment type="function">
    <text evidence="1">F(1)F(0) ATP synthase produces ATP from ADP in the presence of a proton or sodium gradient. F-type ATPases consist of two structural domains, F(1) containing the extramembraneous catalytic core and F(0) containing the membrane proton channel, linked together by a central stalk and a peripheral stalk. During catalysis, ATP synthesis in the catalytic domain of F(1) is coupled via a rotary mechanism of the central stalk subunits to proton translocation.</text>
</comment>
<comment type="function">
    <text evidence="1">Key component of the F(0) channel; it plays a direct role in translocation across the membrane. A homomeric c-ring of between 10-14 subunits forms the central stalk rotor element with the F(1) delta and epsilon subunits.</text>
</comment>
<comment type="subunit">
    <text evidence="1">F-type ATPases have 2 components, F(1) - the catalytic core - and F(0) - the membrane proton channel. F(1) has five subunits: alpha(3), beta(3), gamma(1), delta(1), epsilon(1). F(0) has four main subunits: a(1), b(1), b'(1) and c(10-14). The alpha and beta chains form an alternating ring which encloses part of the gamma chain. F(1) is attached to F(0) by a central stalk formed by the gamma and epsilon chains, while a peripheral stalk is formed by the delta, b and b' chains.</text>
</comment>
<comment type="subcellular location">
    <subcellularLocation>
        <location evidence="1">Plastid</location>
        <location evidence="1">Chloroplast thylakoid membrane</location>
        <topology evidence="1">Multi-pass membrane protein</topology>
    </subcellularLocation>
</comment>
<comment type="miscellaneous">
    <text>In plastids the F-type ATPase is also known as CF(1)CF(0).</text>
</comment>
<comment type="similarity">
    <text evidence="1">Belongs to the ATPase C chain family.</text>
</comment>
<sequence length="81" mass="7990">MNPLISAASVIAAGLAVGLASIGPGVGQGTAAGQAVEGIARQPEAEGKIRGTLLLSLAFMEALTIYGLVVALALLFANPFV</sequence>
<geneLocation type="chloroplast"/>
<organism>
    <name type="scientific">Populus alba</name>
    <name type="common">White poplar</name>
    <dbReference type="NCBI Taxonomy" id="43335"/>
    <lineage>
        <taxon>Eukaryota</taxon>
        <taxon>Viridiplantae</taxon>
        <taxon>Streptophyta</taxon>
        <taxon>Embryophyta</taxon>
        <taxon>Tracheophyta</taxon>
        <taxon>Spermatophyta</taxon>
        <taxon>Magnoliopsida</taxon>
        <taxon>eudicotyledons</taxon>
        <taxon>Gunneridae</taxon>
        <taxon>Pentapetalae</taxon>
        <taxon>rosids</taxon>
        <taxon>fabids</taxon>
        <taxon>Malpighiales</taxon>
        <taxon>Salicaceae</taxon>
        <taxon>Saliceae</taxon>
        <taxon>Populus</taxon>
    </lineage>
</organism>
<protein>
    <recommendedName>
        <fullName evidence="1">ATP synthase subunit c, chloroplastic</fullName>
    </recommendedName>
    <alternativeName>
        <fullName evidence="1">ATP synthase F(0) sector subunit c</fullName>
    </alternativeName>
    <alternativeName>
        <fullName evidence="1">ATPase subunit III</fullName>
    </alternativeName>
    <alternativeName>
        <fullName evidence="1">F-type ATPase subunit c</fullName>
        <shortName evidence="1">F-ATPase subunit c</shortName>
    </alternativeName>
    <alternativeName>
        <fullName evidence="1">Lipid-binding protein</fullName>
    </alternativeName>
</protein>
<evidence type="ECO:0000255" key="1">
    <source>
        <dbReference type="HAMAP-Rule" id="MF_01396"/>
    </source>
</evidence>